<keyword id="KW-0067">ATP-binding</keyword>
<keyword id="KW-0319">Glycerol metabolism</keyword>
<keyword id="KW-0418">Kinase</keyword>
<keyword id="KW-0547">Nucleotide-binding</keyword>
<keyword id="KW-1185">Reference proteome</keyword>
<keyword id="KW-0808">Transferase</keyword>
<proteinExistence type="inferred from homology"/>
<organism>
    <name type="scientific">Clostridium tetani (strain Massachusetts / E88)</name>
    <dbReference type="NCBI Taxonomy" id="212717"/>
    <lineage>
        <taxon>Bacteria</taxon>
        <taxon>Bacillati</taxon>
        <taxon>Bacillota</taxon>
        <taxon>Clostridia</taxon>
        <taxon>Eubacteriales</taxon>
        <taxon>Clostridiaceae</taxon>
        <taxon>Clostridium</taxon>
    </lineage>
</organism>
<comment type="function">
    <text evidence="1">Key enzyme in the regulation of glycerol uptake and metabolism. Catalyzes the phosphorylation of glycerol to yield sn-glycerol 3-phosphate.</text>
</comment>
<comment type="catalytic activity">
    <reaction evidence="1">
        <text>glycerol + ATP = sn-glycerol 3-phosphate + ADP + H(+)</text>
        <dbReference type="Rhea" id="RHEA:21644"/>
        <dbReference type="ChEBI" id="CHEBI:15378"/>
        <dbReference type="ChEBI" id="CHEBI:17754"/>
        <dbReference type="ChEBI" id="CHEBI:30616"/>
        <dbReference type="ChEBI" id="CHEBI:57597"/>
        <dbReference type="ChEBI" id="CHEBI:456216"/>
        <dbReference type="EC" id="2.7.1.30"/>
    </reaction>
</comment>
<comment type="activity regulation">
    <text evidence="1">Activated by phosphorylation and inhibited by fructose 1,6-bisphosphate (FBP).</text>
</comment>
<comment type="pathway">
    <text evidence="1">Polyol metabolism; glycerol degradation via glycerol kinase pathway; sn-glycerol 3-phosphate from glycerol: step 1/1.</text>
</comment>
<comment type="subunit">
    <text evidence="1">Homotetramer and homodimer (in equilibrium).</text>
</comment>
<comment type="similarity">
    <text evidence="1">Belongs to the FGGY kinase family.</text>
</comment>
<protein>
    <recommendedName>
        <fullName evidence="1">Glycerol kinase 1</fullName>
        <ecNumber evidence="1">2.7.1.30</ecNumber>
    </recommendedName>
    <alternativeName>
        <fullName evidence="1">ATP:glycerol 3-phosphotransferase 1</fullName>
    </alternativeName>
    <alternativeName>
        <fullName evidence="1">Glycerokinase 1</fullName>
        <shortName evidence="1">GK 1</shortName>
    </alternativeName>
</protein>
<name>GLPK1_CLOTE</name>
<accession>Q893Q3</accession>
<sequence>MAKYVMALDQGTTSSRCIIFNERGLIVSVAQREFKQIYPKGGWVEHDPMEIWATQFSVATEAMAKANIEASEIASIGITNQRETTIVWDKRTGLPVYNAIVWQCRRTAQICDELKEKGLTETIRNKTGLVLDAYFSGTKIKWILDNVAGAREEAEKGNLIFGTVDTWLIWNLTKGKVHVTDYSNASRTMIYNIHELKWDDELLEALDIPKSMLPEVKPSSYVYGETNSTLFGSSIPIAGVAGDQQAALFGQMCHQEGTAKSTYGTGCFLLMNTGEKAVKSENGLLTTIAFGIDDKVEYALEGSIFIGGAAIQWLRDELRMLKDSPESERYATAVEDTNGVYMVPAFVGLGAPYWDPYARGAIVGLTRGATKEHFIRATLESLAYQTYDVLNAMREDSGIDLKALRVDGGASANDFLMQFQADILGVPVQRPEVIETTALGAAYLAGLAVGYWKDKKDVAQNWAISKTFEPDMIKERREELLEGWHEAVKRSMNWEKSE</sequence>
<gene>
    <name evidence="1" type="primary">glpK1</name>
    <name type="ordered locus">CTC_01758</name>
</gene>
<reference key="1">
    <citation type="journal article" date="2003" name="Proc. Natl. Acad. Sci. U.S.A.">
        <title>The genome sequence of Clostridium tetani, the causative agent of tetanus disease.</title>
        <authorList>
            <person name="Brueggemann H."/>
            <person name="Baeumer S."/>
            <person name="Fricke W.F."/>
            <person name="Wiezer A."/>
            <person name="Liesegang H."/>
            <person name="Decker I."/>
            <person name="Herzberg C."/>
            <person name="Martinez-Arias R."/>
            <person name="Merkl R."/>
            <person name="Henne A."/>
            <person name="Gottschalk G."/>
        </authorList>
    </citation>
    <scope>NUCLEOTIDE SEQUENCE [LARGE SCALE GENOMIC DNA]</scope>
    <source>
        <strain>Massachusetts / E88</strain>
    </source>
</reference>
<feature type="chain" id="PRO_0000059445" description="Glycerol kinase 1">
    <location>
        <begin position="1"/>
        <end position="498"/>
    </location>
</feature>
<feature type="binding site" evidence="1">
    <location>
        <position position="12"/>
    </location>
    <ligand>
        <name>ADP</name>
        <dbReference type="ChEBI" id="CHEBI:456216"/>
    </ligand>
</feature>
<feature type="binding site" evidence="1">
    <location>
        <position position="12"/>
    </location>
    <ligand>
        <name>ATP</name>
        <dbReference type="ChEBI" id="CHEBI:30616"/>
    </ligand>
</feature>
<feature type="binding site" evidence="1">
    <location>
        <position position="12"/>
    </location>
    <ligand>
        <name>sn-glycerol 3-phosphate</name>
        <dbReference type="ChEBI" id="CHEBI:57597"/>
    </ligand>
</feature>
<feature type="binding site" evidence="1">
    <location>
        <position position="13"/>
    </location>
    <ligand>
        <name>ATP</name>
        <dbReference type="ChEBI" id="CHEBI:30616"/>
    </ligand>
</feature>
<feature type="binding site" evidence="1">
    <location>
        <position position="14"/>
    </location>
    <ligand>
        <name>ATP</name>
        <dbReference type="ChEBI" id="CHEBI:30616"/>
    </ligand>
</feature>
<feature type="binding site" evidence="1">
    <location>
        <position position="16"/>
    </location>
    <ligand>
        <name>ADP</name>
        <dbReference type="ChEBI" id="CHEBI:456216"/>
    </ligand>
</feature>
<feature type="binding site" evidence="1">
    <location>
        <position position="82"/>
    </location>
    <ligand>
        <name>glycerol</name>
        <dbReference type="ChEBI" id="CHEBI:17754"/>
    </ligand>
</feature>
<feature type="binding site" evidence="1">
    <location>
        <position position="82"/>
    </location>
    <ligand>
        <name>sn-glycerol 3-phosphate</name>
        <dbReference type="ChEBI" id="CHEBI:57597"/>
    </ligand>
</feature>
<feature type="binding site" evidence="1">
    <location>
        <position position="83"/>
    </location>
    <ligand>
        <name>glycerol</name>
        <dbReference type="ChEBI" id="CHEBI:17754"/>
    </ligand>
</feature>
<feature type="binding site" evidence="1">
    <location>
        <position position="83"/>
    </location>
    <ligand>
        <name>sn-glycerol 3-phosphate</name>
        <dbReference type="ChEBI" id="CHEBI:57597"/>
    </ligand>
</feature>
<feature type="binding site" evidence="1">
    <location>
        <position position="134"/>
    </location>
    <ligand>
        <name>glycerol</name>
        <dbReference type="ChEBI" id="CHEBI:17754"/>
    </ligand>
</feature>
<feature type="binding site" evidence="1">
    <location>
        <position position="134"/>
    </location>
    <ligand>
        <name>sn-glycerol 3-phosphate</name>
        <dbReference type="ChEBI" id="CHEBI:57597"/>
    </ligand>
</feature>
<feature type="binding site" evidence="1">
    <location>
        <position position="243"/>
    </location>
    <ligand>
        <name>glycerol</name>
        <dbReference type="ChEBI" id="CHEBI:17754"/>
    </ligand>
</feature>
<feature type="binding site" evidence="1">
    <location>
        <position position="243"/>
    </location>
    <ligand>
        <name>sn-glycerol 3-phosphate</name>
        <dbReference type="ChEBI" id="CHEBI:57597"/>
    </ligand>
</feature>
<feature type="binding site" evidence="1">
    <location>
        <position position="244"/>
    </location>
    <ligand>
        <name>glycerol</name>
        <dbReference type="ChEBI" id="CHEBI:17754"/>
    </ligand>
</feature>
<feature type="binding site" evidence="1">
    <location>
        <position position="265"/>
    </location>
    <ligand>
        <name>ADP</name>
        <dbReference type="ChEBI" id="CHEBI:456216"/>
    </ligand>
</feature>
<feature type="binding site" evidence="1">
    <location>
        <position position="265"/>
    </location>
    <ligand>
        <name>ATP</name>
        <dbReference type="ChEBI" id="CHEBI:30616"/>
    </ligand>
</feature>
<feature type="binding site" evidence="1">
    <location>
        <position position="308"/>
    </location>
    <ligand>
        <name>ADP</name>
        <dbReference type="ChEBI" id="CHEBI:456216"/>
    </ligand>
</feature>
<feature type="binding site" evidence="1">
    <location>
        <position position="308"/>
    </location>
    <ligand>
        <name>ATP</name>
        <dbReference type="ChEBI" id="CHEBI:30616"/>
    </ligand>
</feature>
<feature type="binding site" evidence="1">
    <location>
        <position position="312"/>
    </location>
    <ligand>
        <name>ATP</name>
        <dbReference type="ChEBI" id="CHEBI:30616"/>
    </ligand>
</feature>
<feature type="binding site" evidence="1">
    <location>
        <position position="409"/>
    </location>
    <ligand>
        <name>ADP</name>
        <dbReference type="ChEBI" id="CHEBI:456216"/>
    </ligand>
</feature>
<feature type="binding site" evidence="1">
    <location>
        <position position="409"/>
    </location>
    <ligand>
        <name>ATP</name>
        <dbReference type="ChEBI" id="CHEBI:30616"/>
    </ligand>
</feature>
<feature type="binding site" evidence="1">
    <location>
        <position position="413"/>
    </location>
    <ligand>
        <name>ADP</name>
        <dbReference type="ChEBI" id="CHEBI:456216"/>
    </ligand>
</feature>
<evidence type="ECO:0000255" key="1">
    <source>
        <dbReference type="HAMAP-Rule" id="MF_00186"/>
    </source>
</evidence>
<dbReference type="EC" id="2.7.1.30" evidence="1"/>
<dbReference type="EMBL" id="AE015927">
    <property type="protein sequence ID" value="AAO36289.1"/>
    <property type="molecule type" value="Genomic_DNA"/>
</dbReference>
<dbReference type="SMR" id="Q893Q3"/>
<dbReference type="STRING" id="212717.CTC_01758"/>
<dbReference type="GeneID" id="24253549"/>
<dbReference type="KEGG" id="ctc:CTC_01758"/>
<dbReference type="HOGENOM" id="CLU_009281_2_3_9"/>
<dbReference type="OrthoDB" id="9805576at2"/>
<dbReference type="UniPathway" id="UPA00618">
    <property type="reaction ID" value="UER00672"/>
</dbReference>
<dbReference type="Proteomes" id="UP000001412">
    <property type="component" value="Chromosome"/>
</dbReference>
<dbReference type="GO" id="GO:0005829">
    <property type="term" value="C:cytosol"/>
    <property type="evidence" value="ECO:0007669"/>
    <property type="project" value="TreeGrafter"/>
</dbReference>
<dbReference type="GO" id="GO:0005524">
    <property type="term" value="F:ATP binding"/>
    <property type="evidence" value="ECO:0007669"/>
    <property type="project" value="UniProtKB-UniRule"/>
</dbReference>
<dbReference type="GO" id="GO:0004370">
    <property type="term" value="F:glycerol kinase activity"/>
    <property type="evidence" value="ECO:0000250"/>
    <property type="project" value="UniProtKB"/>
</dbReference>
<dbReference type="GO" id="GO:0019563">
    <property type="term" value="P:glycerol catabolic process"/>
    <property type="evidence" value="ECO:0007669"/>
    <property type="project" value="UniProtKB-UniRule"/>
</dbReference>
<dbReference type="GO" id="GO:0006071">
    <property type="term" value="P:glycerol metabolic process"/>
    <property type="evidence" value="ECO:0000250"/>
    <property type="project" value="UniProtKB"/>
</dbReference>
<dbReference type="GO" id="GO:0006072">
    <property type="term" value="P:glycerol-3-phosphate metabolic process"/>
    <property type="evidence" value="ECO:0007669"/>
    <property type="project" value="InterPro"/>
</dbReference>
<dbReference type="CDD" id="cd07786">
    <property type="entry name" value="FGGY_EcGK_like"/>
    <property type="match status" value="1"/>
</dbReference>
<dbReference type="FunFam" id="3.30.420.40:FF:000007">
    <property type="entry name" value="Glycerol kinase"/>
    <property type="match status" value="1"/>
</dbReference>
<dbReference type="FunFam" id="3.30.420.40:FF:000008">
    <property type="entry name" value="Glycerol kinase"/>
    <property type="match status" value="1"/>
</dbReference>
<dbReference type="Gene3D" id="3.30.420.40">
    <property type="match status" value="2"/>
</dbReference>
<dbReference type="HAMAP" id="MF_00186">
    <property type="entry name" value="Glycerol_kin"/>
    <property type="match status" value="1"/>
</dbReference>
<dbReference type="InterPro" id="IPR043129">
    <property type="entry name" value="ATPase_NBD"/>
</dbReference>
<dbReference type="InterPro" id="IPR000577">
    <property type="entry name" value="Carb_kinase_FGGY"/>
</dbReference>
<dbReference type="InterPro" id="IPR018483">
    <property type="entry name" value="Carb_kinase_FGGY_CS"/>
</dbReference>
<dbReference type="InterPro" id="IPR018485">
    <property type="entry name" value="FGGY_C"/>
</dbReference>
<dbReference type="InterPro" id="IPR018484">
    <property type="entry name" value="FGGY_N"/>
</dbReference>
<dbReference type="InterPro" id="IPR005999">
    <property type="entry name" value="Glycerol_kin"/>
</dbReference>
<dbReference type="NCBIfam" id="TIGR01311">
    <property type="entry name" value="glycerol_kin"/>
    <property type="match status" value="1"/>
</dbReference>
<dbReference type="NCBIfam" id="NF000756">
    <property type="entry name" value="PRK00047.1"/>
    <property type="match status" value="1"/>
</dbReference>
<dbReference type="PANTHER" id="PTHR10196:SF69">
    <property type="entry name" value="GLYCEROL KINASE"/>
    <property type="match status" value="1"/>
</dbReference>
<dbReference type="PANTHER" id="PTHR10196">
    <property type="entry name" value="SUGAR KINASE"/>
    <property type="match status" value="1"/>
</dbReference>
<dbReference type="Pfam" id="PF02782">
    <property type="entry name" value="FGGY_C"/>
    <property type="match status" value="1"/>
</dbReference>
<dbReference type="Pfam" id="PF00370">
    <property type="entry name" value="FGGY_N"/>
    <property type="match status" value="1"/>
</dbReference>
<dbReference type="PIRSF" id="PIRSF000538">
    <property type="entry name" value="GlpK"/>
    <property type="match status" value="1"/>
</dbReference>
<dbReference type="SUPFAM" id="SSF53067">
    <property type="entry name" value="Actin-like ATPase domain"/>
    <property type="match status" value="2"/>
</dbReference>
<dbReference type="PROSITE" id="PS00933">
    <property type="entry name" value="FGGY_KINASES_1"/>
    <property type="match status" value="1"/>
</dbReference>
<dbReference type="PROSITE" id="PS00445">
    <property type="entry name" value="FGGY_KINASES_2"/>
    <property type="match status" value="1"/>
</dbReference>